<protein>
    <recommendedName>
        <fullName>Testican-3</fullName>
    </recommendedName>
    <alternativeName>
        <fullName>SPARC/osteonectin, CWCV, and Kazal-like domains proteoglycan 3</fullName>
    </alternativeName>
</protein>
<keyword id="KW-0025">Alternative splicing</keyword>
<keyword id="KW-0106">Calcium</keyword>
<keyword id="KW-1015">Disulfide bond</keyword>
<keyword id="KW-0272">Extracellular matrix</keyword>
<keyword id="KW-0325">Glycoprotein</keyword>
<keyword id="KW-0357">Heparan sulfate</keyword>
<keyword id="KW-0481">Metalloenzyme inhibitor</keyword>
<keyword id="KW-0483">Metalloprotease inhibitor</keyword>
<keyword id="KW-0646">Protease inhibitor</keyword>
<keyword id="KW-0654">Proteoglycan</keyword>
<keyword id="KW-1267">Proteomics identification</keyword>
<keyword id="KW-1185">Reference proteome</keyword>
<keyword id="KW-0964">Secreted</keyword>
<keyword id="KW-0732">Signal</keyword>
<organism>
    <name type="scientific">Homo sapiens</name>
    <name type="common">Human</name>
    <dbReference type="NCBI Taxonomy" id="9606"/>
    <lineage>
        <taxon>Eukaryota</taxon>
        <taxon>Metazoa</taxon>
        <taxon>Chordata</taxon>
        <taxon>Craniata</taxon>
        <taxon>Vertebrata</taxon>
        <taxon>Euteleostomi</taxon>
        <taxon>Mammalia</taxon>
        <taxon>Eutheria</taxon>
        <taxon>Euarchontoglires</taxon>
        <taxon>Primates</taxon>
        <taxon>Haplorrhini</taxon>
        <taxon>Catarrhini</taxon>
        <taxon>Hominidae</taxon>
        <taxon>Homo</taxon>
    </lineage>
</organism>
<accession>Q9BQ16</accession>
<accession>B2R7M7</accession>
<accession>B3KR67</accession>
<accession>B4DGK5</accession>
<accession>B4DHB4</accession>
<accession>B4DHV3</accession>
<accession>B4DI46</accession>
<accession>B4DJY3</accession>
<accession>E7EP61</accession>
<accession>F5H099</accession>
<accession>O75705</accession>
<accession>Q6UW53</accession>
<accession>Q96Q26</accession>
<comment type="function">
    <text>May participate in diverse steps of neurogenesis. Inhibits the processing of pro-matrix metalloproteinase 2 (MMP-2) by MT1-MMP and MT3-MMP. May interfere with tumor invasion.</text>
</comment>
<comment type="subcellular location">
    <subcellularLocation>
        <location>Secreted</location>
        <location>Extracellular space</location>
        <location>Extracellular matrix</location>
    </subcellularLocation>
</comment>
<comment type="alternative products">
    <event type="alternative splicing"/>
    <isoform>
        <id>Q9BQ16-3</id>
        <name>3</name>
        <sequence type="displayed"/>
    </isoform>
    <isoform>
        <id>Q9BQ16-1</id>
        <name>1</name>
        <sequence type="described" ref="VSP_013598"/>
    </isoform>
    <isoform>
        <id>Q9BQ16-2</id>
        <name>2</name>
        <name>N-tes</name>
        <sequence type="described" ref="VSP_005334 VSP_005335"/>
    </isoform>
    <isoform>
        <id>Q9BQ16-4</id>
        <name>4</name>
        <sequence type="described" ref="VSP_043681"/>
    </isoform>
    <isoform>
        <id>Q9BQ16-5</id>
        <name>5</name>
        <sequence type="described" ref="VSP_045104"/>
    </isoform>
    <isoform>
        <id>Q9BQ16-6</id>
        <name>6</name>
        <sequence type="described" ref="VSP_045899 VSP_045900"/>
    </isoform>
    <isoform>
        <id>Q9BQ16-7</id>
        <name>7</name>
        <sequence type="described" ref="VSP_046686"/>
    </isoform>
    <isoform>
        <id>Q9BQ16-8</id>
        <name>8</name>
        <sequence type="described" ref="VSP_013598 VSP_046687"/>
    </isoform>
    <isoform>
        <id>Q9BQ16-9</id>
        <name>9</name>
        <sequence type="described" ref="VSP_013598 VSP_005334 VSP_005335"/>
    </isoform>
</comment>
<comment type="tissue specificity">
    <text>Expressed in brain.</text>
</comment>
<comment type="PTM">
    <text evidence="1">Contains chondroitin sulfate and heparan sulfate O-linked oligosaccharides.</text>
</comment>
<comment type="sequence caution" evidence="9">
    <conflict type="erroneous initiation">
        <sequence resource="EMBL-CDS" id="BAG58995"/>
    </conflict>
    <text>Truncated N-terminus.</text>
</comment>
<gene>
    <name type="primary">SPOCK3</name>
    <name type="synonym">TICN3</name>
    <name type="ORF">UNQ409/PRO771</name>
</gene>
<proteinExistence type="evidence at protein level"/>
<feature type="signal peptide" evidence="2">
    <location>
        <begin position="1"/>
        <end position="21"/>
    </location>
</feature>
<feature type="chain" id="PRO_0000026703" description="Testican-3">
    <location>
        <begin position="22"/>
        <end position="436"/>
    </location>
</feature>
<feature type="domain" description="Kazal-like" evidence="4">
    <location>
        <begin position="133"/>
        <end position="185"/>
    </location>
</feature>
<feature type="domain" description="Thyroglobulin type-1" evidence="3">
    <location>
        <begin position="314"/>
        <end position="380"/>
    </location>
</feature>
<feature type="region of interest" description="Disordered" evidence="5">
    <location>
        <begin position="393"/>
        <end position="436"/>
    </location>
</feature>
<feature type="compositionally biased region" description="Acidic residues" evidence="5">
    <location>
        <begin position="399"/>
        <end position="430"/>
    </location>
</feature>
<feature type="glycosylation site" description="O-linked (Xyl...) (glycosaminoglycan) serine" evidence="2">
    <location>
        <position position="387"/>
    </location>
</feature>
<feature type="glycosylation site" description="O-linked (Xyl...) (glycosaminoglycan) serine" evidence="2">
    <location>
        <position position="392"/>
    </location>
</feature>
<feature type="disulfide bond" evidence="1">
    <location>
        <begin position="90"/>
        <end position="101"/>
    </location>
</feature>
<feature type="disulfide bond" evidence="1">
    <location>
        <begin position="95"/>
        <end position="111"/>
    </location>
</feature>
<feature type="disulfide bond" evidence="1">
    <location>
        <begin position="139"/>
        <end position="169"/>
    </location>
</feature>
<feature type="disulfide bond" evidence="1">
    <location>
        <begin position="142"/>
        <end position="162"/>
    </location>
</feature>
<feature type="disulfide bond" evidence="1">
    <location>
        <begin position="151"/>
        <end position="183"/>
    </location>
</feature>
<feature type="disulfide bond" evidence="1">
    <location>
        <begin position="317"/>
        <end position="341"/>
    </location>
</feature>
<feature type="disulfide bond" evidence="1">
    <location>
        <begin position="352"/>
        <end position="359"/>
    </location>
</feature>
<feature type="disulfide bond" evidence="1">
    <location>
        <begin position="361"/>
        <end position="380"/>
    </location>
</feature>
<feature type="splice variant" id="VSP_046686" description="In isoform 7." evidence="7">
    <location>
        <begin position="1"/>
        <end position="120"/>
    </location>
</feature>
<feature type="splice variant" id="VSP_043681" description="In isoform 4." evidence="7">
    <original>MLKVSAVLCVCAAAWCSQSLAAAAAVAAAGGRSDGGNFLDDKQWLTTISQYDKEVGQWNKFRDEVE</original>
    <variation>MITQDHIHMSSGLSQ</variation>
    <location>
        <begin position="1"/>
        <end position="66"/>
    </location>
</feature>
<feature type="splice variant" id="VSP_045899" description="In isoform 6." evidence="7">
    <original>MLKVSAVLCVCAAAWCSQSLAAAA</original>
    <variation>MINNGSPQSLSMTRKSDSGTNSET</variation>
    <location>
        <begin position="1"/>
        <end position="24"/>
    </location>
</feature>
<feature type="splice variant" id="VSP_045900" description="In isoform 6." evidence="7">
    <location>
        <begin position="25"/>
        <end position="120"/>
    </location>
</feature>
<feature type="splice variant" id="VSP_045104" description="In isoform 5." evidence="7">
    <location>
        <begin position="64"/>
        <end position="161"/>
    </location>
</feature>
<feature type="splice variant" id="VSP_013598" description="In isoform 1, isoform 8 and isoform 9." evidence="7 8">
    <location>
        <begin position="64"/>
        <end position="66"/>
    </location>
</feature>
<feature type="splice variant" id="VSP_046687" description="In isoform 8." evidence="7">
    <original>ACSDLEFREVANRLRDWFKALHESGSQNKKTKTLLRPERSR</original>
    <variation>G</variation>
    <location>
        <begin position="200"/>
        <end position="240"/>
    </location>
</feature>
<feature type="splice variant" id="VSP_005334" description="In isoform 2 and isoform 9." evidence="6">
    <original>DPP</original>
    <variation>GKR</variation>
    <location>
        <begin position="314"/>
        <end position="316"/>
    </location>
</feature>
<feature type="splice variant" id="VSP_005335" description="In isoform 2 and isoform 9." evidence="6">
    <location>
        <begin position="317"/>
        <end position="436"/>
    </location>
</feature>
<feature type="sequence variant" id="VAR_051562" description="In dbSNP:rs9685645.">
    <original>I</original>
    <variation>V</variation>
    <location>
        <position position="112"/>
    </location>
</feature>
<feature type="sequence conflict" description="In Ref. 1; CAA04775." evidence="9" ref="1">
    <original>K</original>
    <variation>M</variation>
    <location>
        <position position="348"/>
    </location>
</feature>
<feature type="sequence conflict" description="In Ref. 4; BAG58265." evidence="9" ref="4">
    <original>E</original>
    <variation>G</variation>
    <location>
        <position position="405"/>
    </location>
</feature>
<dbReference type="EMBL" id="AJ001454">
    <property type="protein sequence ID" value="CAA04775.1"/>
    <property type="molecule type" value="mRNA"/>
</dbReference>
<dbReference type="EMBL" id="AB056866">
    <property type="protein sequence ID" value="BAB64908.1"/>
    <property type="molecule type" value="mRNA"/>
</dbReference>
<dbReference type="EMBL" id="AY358973">
    <property type="protein sequence ID" value="AAQ89332.1"/>
    <property type="molecule type" value="mRNA"/>
</dbReference>
<dbReference type="EMBL" id="AK091078">
    <property type="protein sequence ID" value="BAG52279.1"/>
    <property type="molecule type" value="mRNA"/>
</dbReference>
<dbReference type="EMBL" id="AK295281">
    <property type="protein sequence ID" value="BAG58265.1"/>
    <property type="molecule type" value="mRNA"/>
</dbReference>
<dbReference type="EMBL" id="AK295407">
    <property type="protein sequence ID" value="BAG58358.1"/>
    <property type="molecule type" value="mRNA"/>
</dbReference>
<dbReference type="EMBL" id="AK294637">
    <property type="protein sequence ID" value="BAG57816.1"/>
    <property type="molecule type" value="mRNA"/>
</dbReference>
<dbReference type="EMBL" id="AK295015">
    <property type="protein sequence ID" value="BAG58075.1"/>
    <property type="molecule type" value="mRNA"/>
</dbReference>
<dbReference type="EMBL" id="AK296291">
    <property type="protein sequence ID" value="BAG58995.1"/>
    <property type="status" value="ALT_INIT"/>
    <property type="molecule type" value="mRNA"/>
</dbReference>
<dbReference type="EMBL" id="AK313042">
    <property type="protein sequence ID" value="BAG35874.1"/>
    <property type="molecule type" value="mRNA"/>
</dbReference>
<dbReference type="EMBL" id="AC010103">
    <property type="status" value="NOT_ANNOTATED_CDS"/>
    <property type="molecule type" value="Genomic_DNA"/>
</dbReference>
<dbReference type="EMBL" id="AC020599">
    <property type="status" value="NOT_ANNOTATED_CDS"/>
    <property type="molecule type" value="Genomic_DNA"/>
</dbReference>
<dbReference type="EMBL" id="AC023492">
    <property type="status" value="NOT_ANNOTATED_CDS"/>
    <property type="molecule type" value="Genomic_DNA"/>
</dbReference>
<dbReference type="EMBL" id="AC107210">
    <property type="status" value="NOT_ANNOTATED_CDS"/>
    <property type="molecule type" value="Genomic_DNA"/>
</dbReference>
<dbReference type="EMBL" id="CH471056">
    <property type="protein sequence ID" value="EAX04811.1"/>
    <property type="molecule type" value="Genomic_DNA"/>
</dbReference>
<dbReference type="EMBL" id="BC000460">
    <property type="protein sequence ID" value="AAH00460.1"/>
    <property type="molecule type" value="mRNA"/>
</dbReference>
<dbReference type="EMBL" id="BC003017">
    <property type="protein sequence ID" value="AAH03017.1"/>
    <property type="molecule type" value="mRNA"/>
</dbReference>
<dbReference type="EMBL" id="BC013983">
    <property type="protein sequence ID" value="AAH13983.1"/>
    <property type="molecule type" value="mRNA"/>
</dbReference>
<dbReference type="CCDS" id="CCDS34095.1">
    <molecule id="Q9BQ16-1"/>
</dbReference>
<dbReference type="CCDS" id="CCDS54817.1">
    <molecule id="Q9BQ16-3"/>
</dbReference>
<dbReference type="CCDS" id="CCDS56343.1">
    <molecule id="Q9BQ16-7"/>
</dbReference>
<dbReference type="CCDS" id="CCDS56344.1">
    <molecule id="Q9BQ16-4"/>
</dbReference>
<dbReference type="CCDS" id="CCDS56346.1">
    <molecule id="Q9BQ16-8"/>
</dbReference>
<dbReference type="CCDS" id="CCDS56347.1">
    <molecule id="Q9BQ16-9"/>
</dbReference>
<dbReference type="CCDS" id="CCDS58931.1">
    <molecule id="Q9BQ16-5"/>
</dbReference>
<dbReference type="RefSeq" id="NP_001035249.1">
    <molecule id="Q9BQ16-1"/>
    <property type="nucleotide sequence ID" value="NM_001040159.2"/>
</dbReference>
<dbReference type="RefSeq" id="NP_001191281.1">
    <molecule id="Q9BQ16-4"/>
    <property type="nucleotide sequence ID" value="NM_001204352.2"/>
</dbReference>
<dbReference type="RefSeq" id="NP_001191282.1">
    <molecule id="Q9BQ16-7"/>
    <property type="nucleotide sequence ID" value="NM_001204353.1"/>
</dbReference>
<dbReference type="RefSeq" id="NP_001191283.1">
    <property type="nucleotide sequence ID" value="NM_001204354.1"/>
</dbReference>
<dbReference type="RefSeq" id="NP_001191284.1">
    <molecule id="Q9BQ16-6"/>
    <property type="nucleotide sequence ID" value="NM_001204355.2"/>
</dbReference>
<dbReference type="RefSeq" id="NP_001191285.1">
    <molecule id="Q9BQ16-8"/>
    <property type="nucleotide sequence ID" value="NM_001204356.2"/>
</dbReference>
<dbReference type="RefSeq" id="NP_001191287.1">
    <molecule id="Q9BQ16-9"/>
    <property type="nucleotide sequence ID" value="NM_001204358.2"/>
</dbReference>
<dbReference type="RefSeq" id="NP_001238896.1">
    <molecule id="Q9BQ16-5"/>
    <property type="nucleotide sequence ID" value="NM_001251967.2"/>
</dbReference>
<dbReference type="RefSeq" id="NP_001417523.1">
    <molecule id="Q9BQ16-1"/>
    <property type="nucleotide sequence ID" value="NM_001430594.1"/>
</dbReference>
<dbReference type="RefSeq" id="NP_058646.2">
    <molecule id="Q9BQ16-3"/>
    <property type="nucleotide sequence ID" value="NM_016950.3"/>
</dbReference>
<dbReference type="RefSeq" id="XP_011530320.1">
    <molecule id="Q9BQ16-3"/>
    <property type="nucleotide sequence ID" value="XM_011532018.2"/>
</dbReference>
<dbReference type="RefSeq" id="XP_016863747.1">
    <molecule id="Q9BQ16-1"/>
    <property type="nucleotide sequence ID" value="XM_017008258.2"/>
</dbReference>
<dbReference type="RefSeq" id="XP_054206103.1">
    <molecule id="Q9BQ16-3"/>
    <property type="nucleotide sequence ID" value="XM_054350128.1"/>
</dbReference>
<dbReference type="RefSeq" id="XP_054206104.1">
    <molecule id="Q9BQ16-1"/>
    <property type="nucleotide sequence ID" value="XM_054350129.1"/>
</dbReference>
<dbReference type="SMR" id="Q9BQ16"/>
<dbReference type="BioGRID" id="119160">
    <property type="interactions" value="7"/>
</dbReference>
<dbReference type="FunCoup" id="Q9BQ16">
    <property type="interactions" value="775"/>
</dbReference>
<dbReference type="IntAct" id="Q9BQ16">
    <property type="interactions" value="4"/>
</dbReference>
<dbReference type="MINT" id="Q9BQ16"/>
<dbReference type="STRING" id="9606.ENSP00000349677"/>
<dbReference type="MEROPS" id="I01.980"/>
<dbReference type="MEROPS" id="I31.007"/>
<dbReference type="GlyCosmos" id="Q9BQ16">
    <property type="glycosylation" value="2 sites, No reported glycans"/>
</dbReference>
<dbReference type="GlyGen" id="Q9BQ16">
    <property type="glycosylation" value="3 sites, 1 O-linked glycan (1 site)"/>
</dbReference>
<dbReference type="iPTMnet" id="Q9BQ16"/>
<dbReference type="PhosphoSitePlus" id="Q9BQ16"/>
<dbReference type="BioMuta" id="SPOCK3"/>
<dbReference type="DMDM" id="67473703"/>
<dbReference type="jPOST" id="Q9BQ16"/>
<dbReference type="MassIVE" id="Q9BQ16"/>
<dbReference type="PaxDb" id="9606-ENSP00000349677"/>
<dbReference type="PeptideAtlas" id="Q9BQ16"/>
<dbReference type="ProteomicsDB" id="17290"/>
<dbReference type="ProteomicsDB" id="25277"/>
<dbReference type="ProteomicsDB" id="4139"/>
<dbReference type="ProteomicsDB" id="4275"/>
<dbReference type="ProteomicsDB" id="4419"/>
<dbReference type="ProteomicsDB" id="78611">
    <molecule id="Q9BQ16-3"/>
</dbReference>
<dbReference type="ProteomicsDB" id="78612">
    <molecule id="Q9BQ16-1"/>
</dbReference>
<dbReference type="ProteomicsDB" id="78613">
    <molecule id="Q9BQ16-2"/>
</dbReference>
<dbReference type="ProteomicsDB" id="78614">
    <molecule id="Q9BQ16-4"/>
</dbReference>
<dbReference type="TopDownProteomics" id="Q9BQ16-2">
    <molecule id="Q9BQ16-2"/>
</dbReference>
<dbReference type="TopDownProteomics" id="Q9BQ16-3">
    <molecule id="Q9BQ16-3"/>
</dbReference>
<dbReference type="TopDownProteomics" id="Q9BQ16-5">
    <molecule id="Q9BQ16-5"/>
</dbReference>
<dbReference type="Antibodypedia" id="28345">
    <property type="antibodies" value="131 antibodies from 19 providers"/>
</dbReference>
<dbReference type="DNASU" id="50859"/>
<dbReference type="Ensembl" id="ENST00000357154.7">
    <molecule id="Q9BQ16-3"/>
    <property type="protein sequence ID" value="ENSP00000349677.3"/>
    <property type="gene ID" value="ENSG00000196104.11"/>
</dbReference>
<dbReference type="Ensembl" id="ENST00000357545.9">
    <molecule id="Q9BQ16-1"/>
    <property type="protein sequence ID" value="ENSP00000350153.4"/>
    <property type="gene ID" value="ENSG00000196104.11"/>
</dbReference>
<dbReference type="Ensembl" id="ENST00000421836.6">
    <molecule id="Q9BQ16-4"/>
    <property type="protein sequence ID" value="ENSP00000411344.2"/>
    <property type="gene ID" value="ENSG00000196104.11"/>
</dbReference>
<dbReference type="Ensembl" id="ENST00000502330.5">
    <molecule id="Q9BQ16-3"/>
    <property type="protein sequence ID" value="ENSP00000423606.1"/>
    <property type="gene ID" value="ENSG00000196104.11"/>
</dbReference>
<dbReference type="Ensembl" id="ENST00000504953.5">
    <molecule id="Q9BQ16-1"/>
    <property type="protein sequence ID" value="ENSP00000425570.1"/>
    <property type="gene ID" value="ENSG00000196104.11"/>
</dbReference>
<dbReference type="Ensembl" id="ENST00000506886.5">
    <molecule id="Q9BQ16-3"/>
    <property type="protein sequence ID" value="ENSP00000420920.1"/>
    <property type="gene ID" value="ENSG00000196104.11"/>
</dbReference>
<dbReference type="Ensembl" id="ENST00000510741.5">
    <molecule id="Q9BQ16-8"/>
    <property type="protein sequence ID" value="ENSP00000426716.1"/>
    <property type="gene ID" value="ENSG00000196104.11"/>
</dbReference>
<dbReference type="Ensembl" id="ENST00000511269.5">
    <molecule id="Q9BQ16-1"/>
    <property type="protein sequence ID" value="ENSP00000425502.1"/>
    <property type="gene ID" value="ENSG00000196104.11"/>
</dbReference>
<dbReference type="Ensembl" id="ENST00000511531.5">
    <molecule id="Q9BQ16-3"/>
    <property type="protein sequence ID" value="ENSP00000423421.1"/>
    <property type="gene ID" value="ENSG00000196104.11"/>
</dbReference>
<dbReference type="Ensembl" id="ENST00000512648.5">
    <molecule id="Q9BQ16-9"/>
    <property type="protein sequence ID" value="ENSP00000426177.1"/>
    <property type="gene ID" value="ENSG00000196104.11"/>
</dbReference>
<dbReference type="Ensembl" id="ENST00000512681.5">
    <molecule id="Q9BQ16-5"/>
    <property type="protein sequence ID" value="ENSP00000426318.1"/>
    <property type="gene ID" value="ENSG00000196104.11"/>
</dbReference>
<dbReference type="Ensembl" id="ENST00000541354.5">
    <molecule id="Q9BQ16-7"/>
    <property type="protein sequence ID" value="ENSP00000444789.1"/>
    <property type="gene ID" value="ENSG00000196104.11"/>
</dbReference>
<dbReference type="GeneID" id="50859"/>
<dbReference type="KEGG" id="hsa:50859"/>
<dbReference type="MANE-Select" id="ENST00000357545.9">
    <molecule id="Q9BQ16-1"/>
    <property type="protein sequence ID" value="ENSP00000350153.4"/>
    <property type="RefSeq nucleotide sequence ID" value="NM_001040159.2"/>
    <property type="RefSeq protein sequence ID" value="NP_001035249.1"/>
</dbReference>
<dbReference type="UCSC" id="uc003iri.2">
    <molecule id="Q9BQ16-3"/>
    <property type="organism name" value="human"/>
</dbReference>
<dbReference type="AGR" id="HGNC:13565"/>
<dbReference type="CTD" id="50859"/>
<dbReference type="DisGeNET" id="50859"/>
<dbReference type="GeneCards" id="SPOCK3"/>
<dbReference type="HGNC" id="HGNC:13565">
    <property type="gene designation" value="SPOCK3"/>
</dbReference>
<dbReference type="HPA" id="ENSG00000196104">
    <property type="expression patterns" value="Tissue enhanced (brain, parathyroid gland, prostate)"/>
</dbReference>
<dbReference type="MIM" id="607989">
    <property type="type" value="gene"/>
</dbReference>
<dbReference type="neXtProt" id="NX_Q9BQ16"/>
<dbReference type="OpenTargets" id="ENSG00000196104"/>
<dbReference type="PharmGKB" id="PA134977377"/>
<dbReference type="VEuPathDB" id="HostDB:ENSG00000196104"/>
<dbReference type="eggNOG" id="KOG3555">
    <property type="taxonomic scope" value="Eukaryota"/>
</dbReference>
<dbReference type="GeneTree" id="ENSGT00940000157828"/>
<dbReference type="HOGENOM" id="CLU_037217_1_0_1"/>
<dbReference type="InParanoid" id="Q9BQ16"/>
<dbReference type="OMA" id="KQCPVIY"/>
<dbReference type="OrthoDB" id="8875634at2759"/>
<dbReference type="PAN-GO" id="Q9BQ16">
    <property type="GO annotations" value="0 GO annotations based on evolutionary models"/>
</dbReference>
<dbReference type="PhylomeDB" id="Q9BQ16"/>
<dbReference type="TreeFam" id="TF317779"/>
<dbReference type="PathwayCommons" id="Q9BQ16"/>
<dbReference type="Reactome" id="R-HSA-1592389">
    <property type="pathway name" value="Activation of Matrix Metalloproteinases"/>
</dbReference>
<dbReference type="SignaLink" id="Q9BQ16"/>
<dbReference type="BioGRID-ORCS" id="50859">
    <property type="hits" value="14 hits in 1138 CRISPR screens"/>
</dbReference>
<dbReference type="ChiTaRS" id="SPOCK3">
    <property type="organism name" value="human"/>
</dbReference>
<dbReference type="GenomeRNAi" id="50859"/>
<dbReference type="Pharos" id="Q9BQ16">
    <property type="development level" value="Tbio"/>
</dbReference>
<dbReference type="PRO" id="PR:Q9BQ16"/>
<dbReference type="Proteomes" id="UP000005640">
    <property type="component" value="Chromosome 4"/>
</dbReference>
<dbReference type="RNAct" id="Q9BQ16">
    <property type="molecule type" value="protein"/>
</dbReference>
<dbReference type="Bgee" id="ENSG00000196104">
    <property type="expression patterns" value="Expressed in lateral globus pallidus and 157 other cell types or tissues"/>
</dbReference>
<dbReference type="ExpressionAtlas" id="Q9BQ16">
    <property type="expression patterns" value="baseline and differential"/>
</dbReference>
<dbReference type="GO" id="GO:0031012">
    <property type="term" value="C:extracellular matrix"/>
    <property type="evidence" value="ECO:0007005"/>
    <property type="project" value="GO_Central"/>
</dbReference>
<dbReference type="GO" id="GO:0005615">
    <property type="term" value="C:extracellular space"/>
    <property type="evidence" value="ECO:0000314"/>
    <property type="project" value="UniProtKB"/>
</dbReference>
<dbReference type="GO" id="GO:0005509">
    <property type="term" value="F:calcium ion binding"/>
    <property type="evidence" value="ECO:0000318"/>
    <property type="project" value="GO_Central"/>
</dbReference>
<dbReference type="GO" id="GO:0005518">
    <property type="term" value="F:collagen binding"/>
    <property type="evidence" value="ECO:0000318"/>
    <property type="project" value="GO_Central"/>
</dbReference>
<dbReference type="GO" id="GO:0050840">
    <property type="term" value="F:extracellular matrix binding"/>
    <property type="evidence" value="ECO:0000318"/>
    <property type="project" value="GO_Central"/>
</dbReference>
<dbReference type="GO" id="GO:0005539">
    <property type="term" value="F:glycosaminoglycan binding"/>
    <property type="evidence" value="ECO:0007669"/>
    <property type="project" value="Ensembl"/>
</dbReference>
<dbReference type="GO" id="GO:0008191">
    <property type="term" value="F:metalloendopeptidase inhibitor activity"/>
    <property type="evidence" value="ECO:0000314"/>
    <property type="project" value="UniProtKB"/>
</dbReference>
<dbReference type="GO" id="GO:2000146">
    <property type="term" value="P:negative regulation of cell motility"/>
    <property type="evidence" value="ECO:0000304"/>
    <property type="project" value="ParkinsonsUK-UCL"/>
</dbReference>
<dbReference type="GO" id="GO:0010951">
    <property type="term" value="P:negative regulation of endopeptidase activity"/>
    <property type="evidence" value="ECO:0000314"/>
    <property type="project" value="UniProtKB"/>
</dbReference>
<dbReference type="CDD" id="cd16239">
    <property type="entry name" value="EFh_SPARC_TICN3"/>
    <property type="match status" value="1"/>
</dbReference>
<dbReference type="CDD" id="cd00104">
    <property type="entry name" value="KAZAL_FS"/>
    <property type="match status" value="1"/>
</dbReference>
<dbReference type="CDD" id="cd00191">
    <property type="entry name" value="TY"/>
    <property type="match status" value="1"/>
</dbReference>
<dbReference type="FunFam" id="1.10.238.10:FF:000053">
    <property type="entry name" value="Putative testican-3 isoform 3"/>
    <property type="match status" value="1"/>
</dbReference>
<dbReference type="FunFam" id="3.30.60.30:FF:000003">
    <property type="entry name" value="SPARC/osteonectin, cwcv and kazal-like domains proteoglycan 3"/>
    <property type="match status" value="1"/>
</dbReference>
<dbReference type="FunFam" id="4.10.800.10:FF:000001">
    <property type="entry name" value="Testican-3 isoform 2"/>
    <property type="match status" value="1"/>
</dbReference>
<dbReference type="Gene3D" id="3.30.60.30">
    <property type="match status" value="1"/>
</dbReference>
<dbReference type="Gene3D" id="1.10.238.10">
    <property type="entry name" value="EF-hand"/>
    <property type="match status" value="1"/>
</dbReference>
<dbReference type="Gene3D" id="4.10.800.10">
    <property type="entry name" value="Thyroglobulin type-1"/>
    <property type="match status" value="1"/>
</dbReference>
<dbReference type="InterPro" id="IPR011992">
    <property type="entry name" value="EF-hand-dom_pair"/>
</dbReference>
<dbReference type="InterPro" id="IPR002350">
    <property type="entry name" value="Kazal_dom"/>
</dbReference>
<dbReference type="InterPro" id="IPR036058">
    <property type="entry name" value="Kazal_dom_sf"/>
</dbReference>
<dbReference type="InterPro" id="IPR019577">
    <property type="entry name" value="SPARC/Testican_Ca-bd-dom"/>
</dbReference>
<dbReference type="InterPro" id="IPR000716">
    <property type="entry name" value="Thyroglobulin_1"/>
</dbReference>
<dbReference type="InterPro" id="IPR036857">
    <property type="entry name" value="Thyroglobulin_1_sf"/>
</dbReference>
<dbReference type="PANTHER" id="PTHR13866">
    <property type="entry name" value="SPARC OSTEONECTIN"/>
    <property type="match status" value="1"/>
</dbReference>
<dbReference type="PANTHER" id="PTHR13866:SF21">
    <property type="entry name" value="TESTICAN-3"/>
    <property type="match status" value="1"/>
</dbReference>
<dbReference type="Pfam" id="PF07648">
    <property type="entry name" value="Kazal_2"/>
    <property type="match status" value="1"/>
</dbReference>
<dbReference type="Pfam" id="PF10591">
    <property type="entry name" value="SPARC_Ca_bdg"/>
    <property type="match status" value="1"/>
</dbReference>
<dbReference type="Pfam" id="PF00086">
    <property type="entry name" value="Thyroglobulin_1"/>
    <property type="match status" value="1"/>
</dbReference>
<dbReference type="SMART" id="SM00280">
    <property type="entry name" value="KAZAL"/>
    <property type="match status" value="1"/>
</dbReference>
<dbReference type="SMART" id="SM00211">
    <property type="entry name" value="TY"/>
    <property type="match status" value="1"/>
</dbReference>
<dbReference type="SUPFAM" id="SSF47473">
    <property type="entry name" value="EF-hand"/>
    <property type="match status" value="1"/>
</dbReference>
<dbReference type="SUPFAM" id="SSF100895">
    <property type="entry name" value="Kazal-type serine protease inhibitors"/>
    <property type="match status" value="1"/>
</dbReference>
<dbReference type="SUPFAM" id="SSF57610">
    <property type="entry name" value="Thyroglobulin type-1 domain"/>
    <property type="match status" value="1"/>
</dbReference>
<dbReference type="PROSITE" id="PS51465">
    <property type="entry name" value="KAZAL_2"/>
    <property type="match status" value="1"/>
</dbReference>
<dbReference type="PROSITE" id="PS00484">
    <property type="entry name" value="THYROGLOBULIN_1_1"/>
    <property type="match status" value="1"/>
</dbReference>
<dbReference type="PROSITE" id="PS51162">
    <property type="entry name" value="THYROGLOBULIN_1_2"/>
    <property type="match status" value="1"/>
</dbReference>
<evidence type="ECO:0000250" key="1"/>
<evidence type="ECO:0000255" key="2"/>
<evidence type="ECO:0000255" key="3">
    <source>
        <dbReference type="PROSITE-ProRule" id="PRU00500"/>
    </source>
</evidence>
<evidence type="ECO:0000255" key="4">
    <source>
        <dbReference type="PROSITE-ProRule" id="PRU00798"/>
    </source>
</evidence>
<evidence type="ECO:0000256" key="5">
    <source>
        <dbReference type="SAM" id="MobiDB-lite"/>
    </source>
</evidence>
<evidence type="ECO:0000303" key="6">
    <source>
    </source>
</evidence>
<evidence type="ECO:0000303" key="7">
    <source>
    </source>
</evidence>
<evidence type="ECO:0000303" key="8">
    <source>
    </source>
</evidence>
<evidence type="ECO:0000305" key="9"/>
<reference key="1">
    <citation type="submission" date="1997-09" db="EMBL/GenBank/DDBJ databases">
        <title>Cloning and expression of testican-3, a novel member of brain-specific, calcium-binding proteoglycans.</title>
        <authorList>
            <person name="Vannahme C."/>
            <person name="Hartmann U."/>
            <person name="Goesling S."/>
            <person name="Kohfeldt E."/>
            <person name="Timpl R."/>
            <person name="Paulsson M."/>
            <person name="Maurer P."/>
        </authorList>
    </citation>
    <scope>NUCLEOTIDE SEQUENCE [MRNA] (ISOFORM 3)</scope>
    <source>
        <tissue>Brain</tissue>
    </source>
</reference>
<reference key="2">
    <citation type="journal article" date="2001" name="Cancer Res.">
        <title>Suppression of membrane-type 1 matrix metalloproteinase (MMP)-mediated MMP-2 activation and tumor invasion by testican 3 and its splicing variant gene product, N-Tes.</title>
        <authorList>
            <person name="Nakada M."/>
            <person name="Yamada A."/>
            <person name="Takino T."/>
            <person name="Miyamori H."/>
            <person name="Takahashi T."/>
            <person name="Yamashita J."/>
            <person name="Sato H."/>
        </authorList>
    </citation>
    <scope>NUCLEOTIDE SEQUENCE [MRNA] (ISOFORM 2)</scope>
    <scope>CHARACTERIZATION</scope>
    <source>
        <tissue>Fetal kidney</tissue>
    </source>
</reference>
<reference key="3">
    <citation type="journal article" date="2003" name="Genome Res.">
        <title>The secreted protein discovery initiative (SPDI), a large-scale effort to identify novel human secreted and transmembrane proteins: a bioinformatics assessment.</title>
        <authorList>
            <person name="Clark H.F."/>
            <person name="Gurney A.L."/>
            <person name="Abaya E."/>
            <person name="Baker K."/>
            <person name="Baldwin D.T."/>
            <person name="Brush J."/>
            <person name="Chen J."/>
            <person name="Chow B."/>
            <person name="Chui C."/>
            <person name="Crowley C."/>
            <person name="Currell B."/>
            <person name="Deuel B."/>
            <person name="Dowd P."/>
            <person name="Eaton D."/>
            <person name="Foster J.S."/>
            <person name="Grimaldi C."/>
            <person name="Gu Q."/>
            <person name="Hass P.E."/>
            <person name="Heldens S."/>
            <person name="Huang A."/>
            <person name="Kim H.S."/>
            <person name="Klimowski L."/>
            <person name="Jin Y."/>
            <person name="Johnson S."/>
            <person name="Lee J."/>
            <person name="Lewis L."/>
            <person name="Liao D."/>
            <person name="Mark M.R."/>
            <person name="Robbie E."/>
            <person name="Sanchez C."/>
            <person name="Schoenfeld J."/>
            <person name="Seshagiri S."/>
            <person name="Simmons L."/>
            <person name="Singh J."/>
            <person name="Smith V."/>
            <person name="Stinson J."/>
            <person name="Vagts A."/>
            <person name="Vandlen R.L."/>
            <person name="Watanabe C."/>
            <person name="Wieand D."/>
            <person name="Woods K."/>
            <person name="Xie M.-H."/>
            <person name="Yansura D.G."/>
            <person name="Yi S."/>
            <person name="Yu G."/>
            <person name="Yuan J."/>
            <person name="Zhang M."/>
            <person name="Zhang Z."/>
            <person name="Goddard A.D."/>
            <person name="Wood W.I."/>
            <person name="Godowski P.J."/>
            <person name="Gray A.M."/>
        </authorList>
    </citation>
    <scope>NUCLEOTIDE SEQUENCE [LARGE SCALE MRNA] (ISOFORM 3)</scope>
</reference>
<reference key="4">
    <citation type="journal article" date="2004" name="Nat. Genet.">
        <title>Complete sequencing and characterization of 21,243 full-length human cDNAs.</title>
        <authorList>
            <person name="Ota T."/>
            <person name="Suzuki Y."/>
            <person name="Nishikawa T."/>
            <person name="Otsuki T."/>
            <person name="Sugiyama T."/>
            <person name="Irie R."/>
            <person name="Wakamatsu A."/>
            <person name="Hayashi K."/>
            <person name="Sato H."/>
            <person name="Nagai K."/>
            <person name="Kimura K."/>
            <person name="Makita H."/>
            <person name="Sekine M."/>
            <person name="Obayashi M."/>
            <person name="Nishi T."/>
            <person name="Shibahara T."/>
            <person name="Tanaka T."/>
            <person name="Ishii S."/>
            <person name="Yamamoto J."/>
            <person name="Saito K."/>
            <person name="Kawai Y."/>
            <person name="Isono Y."/>
            <person name="Nakamura Y."/>
            <person name="Nagahari K."/>
            <person name="Murakami K."/>
            <person name="Yasuda T."/>
            <person name="Iwayanagi T."/>
            <person name="Wagatsuma M."/>
            <person name="Shiratori A."/>
            <person name="Sudo H."/>
            <person name="Hosoiri T."/>
            <person name="Kaku Y."/>
            <person name="Kodaira H."/>
            <person name="Kondo H."/>
            <person name="Sugawara M."/>
            <person name="Takahashi M."/>
            <person name="Kanda K."/>
            <person name="Yokoi T."/>
            <person name="Furuya T."/>
            <person name="Kikkawa E."/>
            <person name="Omura Y."/>
            <person name="Abe K."/>
            <person name="Kamihara K."/>
            <person name="Katsuta N."/>
            <person name="Sato K."/>
            <person name="Tanikawa M."/>
            <person name="Yamazaki M."/>
            <person name="Ninomiya K."/>
            <person name="Ishibashi T."/>
            <person name="Yamashita H."/>
            <person name="Murakawa K."/>
            <person name="Fujimori K."/>
            <person name="Tanai H."/>
            <person name="Kimata M."/>
            <person name="Watanabe M."/>
            <person name="Hiraoka S."/>
            <person name="Chiba Y."/>
            <person name="Ishida S."/>
            <person name="Ono Y."/>
            <person name="Takiguchi S."/>
            <person name="Watanabe S."/>
            <person name="Yosida M."/>
            <person name="Hotuta T."/>
            <person name="Kusano J."/>
            <person name="Kanehori K."/>
            <person name="Takahashi-Fujii A."/>
            <person name="Hara H."/>
            <person name="Tanase T.-O."/>
            <person name="Nomura Y."/>
            <person name="Togiya S."/>
            <person name="Komai F."/>
            <person name="Hara R."/>
            <person name="Takeuchi K."/>
            <person name="Arita M."/>
            <person name="Imose N."/>
            <person name="Musashino K."/>
            <person name="Yuuki H."/>
            <person name="Oshima A."/>
            <person name="Sasaki N."/>
            <person name="Aotsuka S."/>
            <person name="Yoshikawa Y."/>
            <person name="Matsunawa H."/>
            <person name="Ichihara T."/>
            <person name="Shiohata N."/>
            <person name="Sano S."/>
            <person name="Moriya S."/>
            <person name="Momiyama H."/>
            <person name="Satoh N."/>
            <person name="Takami S."/>
            <person name="Terashima Y."/>
            <person name="Suzuki O."/>
            <person name="Nakagawa S."/>
            <person name="Senoh A."/>
            <person name="Mizoguchi H."/>
            <person name="Goto Y."/>
            <person name="Shimizu F."/>
            <person name="Wakebe H."/>
            <person name="Hishigaki H."/>
            <person name="Watanabe T."/>
            <person name="Sugiyama A."/>
            <person name="Takemoto M."/>
            <person name="Kawakami B."/>
            <person name="Yamazaki M."/>
            <person name="Watanabe K."/>
            <person name="Kumagai A."/>
            <person name="Itakura S."/>
            <person name="Fukuzumi Y."/>
            <person name="Fujimori Y."/>
            <person name="Komiyama M."/>
            <person name="Tashiro H."/>
            <person name="Tanigami A."/>
            <person name="Fujiwara T."/>
            <person name="Ono T."/>
            <person name="Yamada K."/>
            <person name="Fujii Y."/>
            <person name="Ozaki K."/>
            <person name="Hirao M."/>
            <person name="Ohmori Y."/>
            <person name="Kawabata A."/>
            <person name="Hikiji T."/>
            <person name="Kobatake N."/>
            <person name="Inagaki H."/>
            <person name="Ikema Y."/>
            <person name="Okamoto S."/>
            <person name="Okitani R."/>
            <person name="Kawakami T."/>
            <person name="Noguchi S."/>
            <person name="Itoh T."/>
            <person name="Shigeta K."/>
            <person name="Senba T."/>
            <person name="Matsumura K."/>
            <person name="Nakajima Y."/>
            <person name="Mizuno T."/>
            <person name="Morinaga M."/>
            <person name="Sasaki M."/>
            <person name="Togashi T."/>
            <person name="Oyama M."/>
            <person name="Hata H."/>
            <person name="Watanabe M."/>
            <person name="Komatsu T."/>
            <person name="Mizushima-Sugano J."/>
            <person name="Satoh T."/>
            <person name="Shirai Y."/>
            <person name="Takahashi Y."/>
            <person name="Nakagawa K."/>
            <person name="Okumura K."/>
            <person name="Nagase T."/>
            <person name="Nomura N."/>
            <person name="Kikuchi H."/>
            <person name="Masuho Y."/>
            <person name="Yamashita R."/>
            <person name="Nakai K."/>
            <person name="Yada T."/>
            <person name="Nakamura Y."/>
            <person name="Ohara O."/>
            <person name="Isogai T."/>
            <person name="Sugano S."/>
        </authorList>
    </citation>
    <scope>NUCLEOTIDE SEQUENCE [LARGE SCALE MRNA] (ISOFORMS 1; 3; 4; 5; 6 AND 7)</scope>
    <scope>NUCLEOTIDE SEQUENCE [LARGE SCALE MRNA] OF 38-356 (ISOFORM 8)</scope>
    <source>
        <tissue>Brain</tissue>
        <tissue>Caudate nucleus</tissue>
        <tissue>Corpus callosum</tissue>
        <tissue>Thalamus</tissue>
    </source>
</reference>
<reference key="5">
    <citation type="journal article" date="2005" name="Nature">
        <title>Generation and annotation of the DNA sequences of human chromosomes 2 and 4.</title>
        <authorList>
            <person name="Hillier L.W."/>
            <person name="Graves T.A."/>
            <person name="Fulton R.S."/>
            <person name="Fulton L.A."/>
            <person name="Pepin K.H."/>
            <person name="Minx P."/>
            <person name="Wagner-McPherson C."/>
            <person name="Layman D."/>
            <person name="Wylie K."/>
            <person name="Sekhon M."/>
            <person name="Becker M.C."/>
            <person name="Fewell G.A."/>
            <person name="Delehaunty K.D."/>
            <person name="Miner T.L."/>
            <person name="Nash W.E."/>
            <person name="Kremitzki C."/>
            <person name="Oddy L."/>
            <person name="Du H."/>
            <person name="Sun H."/>
            <person name="Bradshaw-Cordum H."/>
            <person name="Ali J."/>
            <person name="Carter J."/>
            <person name="Cordes M."/>
            <person name="Harris A."/>
            <person name="Isak A."/>
            <person name="van Brunt A."/>
            <person name="Nguyen C."/>
            <person name="Du F."/>
            <person name="Courtney L."/>
            <person name="Kalicki J."/>
            <person name="Ozersky P."/>
            <person name="Abbott S."/>
            <person name="Armstrong J."/>
            <person name="Belter E.A."/>
            <person name="Caruso L."/>
            <person name="Cedroni M."/>
            <person name="Cotton M."/>
            <person name="Davidson T."/>
            <person name="Desai A."/>
            <person name="Elliott G."/>
            <person name="Erb T."/>
            <person name="Fronick C."/>
            <person name="Gaige T."/>
            <person name="Haakenson W."/>
            <person name="Haglund K."/>
            <person name="Holmes A."/>
            <person name="Harkins R."/>
            <person name="Kim K."/>
            <person name="Kruchowski S.S."/>
            <person name="Strong C.M."/>
            <person name="Grewal N."/>
            <person name="Goyea E."/>
            <person name="Hou S."/>
            <person name="Levy A."/>
            <person name="Martinka S."/>
            <person name="Mead K."/>
            <person name="McLellan M.D."/>
            <person name="Meyer R."/>
            <person name="Randall-Maher J."/>
            <person name="Tomlinson C."/>
            <person name="Dauphin-Kohlberg S."/>
            <person name="Kozlowicz-Reilly A."/>
            <person name="Shah N."/>
            <person name="Swearengen-Shahid S."/>
            <person name="Snider J."/>
            <person name="Strong J.T."/>
            <person name="Thompson J."/>
            <person name="Yoakum M."/>
            <person name="Leonard S."/>
            <person name="Pearman C."/>
            <person name="Trani L."/>
            <person name="Radionenko M."/>
            <person name="Waligorski J.E."/>
            <person name="Wang C."/>
            <person name="Rock S.M."/>
            <person name="Tin-Wollam A.-M."/>
            <person name="Maupin R."/>
            <person name="Latreille P."/>
            <person name="Wendl M.C."/>
            <person name="Yang S.-P."/>
            <person name="Pohl C."/>
            <person name="Wallis J.W."/>
            <person name="Spieth J."/>
            <person name="Bieri T.A."/>
            <person name="Berkowicz N."/>
            <person name="Nelson J.O."/>
            <person name="Osborne J."/>
            <person name="Ding L."/>
            <person name="Meyer R."/>
            <person name="Sabo A."/>
            <person name="Shotland Y."/>
            <person name="Sinha P."/>
            <person name="Wohldmann P.E."/>
            <person name="Cook L.L."/>
            <person name="Hickenbotham M.T."/>
            <person name="Eldred J."/>
            <person name="Williams D."/>
            <person name="Jones T.A."/>
            <person name="She X."/>
            <person name="Ciccarelli F.D."/>
            <person name="Izaurralde E."/>
            <person name="Taylor J."/>
            <person name="Schmutz J."/>
            <person name="Myers R.M."/>
            <person name="Cox D.R."/>
            <person name="Huang X."/>
            <person name="McPherson J.D."/>
            <person name="Mardis E.R."/>
            <person name="Clifton S.W."/>
            <person name="Warren W.C."/>
            <person name="Chinwalla A.T."/>
            <person name="Eddy S.R."/>
            <person name="Marra M.A."/>
            <person name="Ovcharenko I."/>
            <person name="Furey T.S."/>
            <person name="Miller W."/>
            <person name="Eichler E.E."/>
            <person name="Bork P."/>
            <person name="Suyama M."/>
            <person name="Torrents D."/>
            <person name="Waterston R.H."/>
            <person name="Wilson R.K."/>
        </authorList>
    </citation>
    <scope>NUCLEOTIDE SEQUENCE [LARGE SCALE GENOMIC DNA]</scope>
</reference>
<reference key="6">
    <citation type="submission" date="2005-09" db="EMBL/GenBank/DDBJ databases">
        <authorList>
            <person name="Mural R.J."/>
            <person name="Istrail S."/>
            <person name="Sutton G.G."/>
            <person name="Florea L."/>
            <person name="Halpern A.L."/>
            <person name="Mobarry C.M."/>
            <person name="Lippert R."/>
            <person name="Walenz B."/>
            <person name="Shatkay H."/>
            <person name="Dew I."/>
            <person name="Miller J.R."/>
            <person name="Flanigan M.J."/>
            <person name="Edwards N.J."/>
            <person name="Bolanos R."/>
            <person name="Fasulo D."/>
            <person name="Halldorsson B.V."/>
            <person name="Hannenhalli S."/>
            <person name="Turner R."/>
            <person name="Yooseph S."/>
            <person name="Lu F."/>
            <person name="Nusskern D.R."/>
            <person name="Shue B.C."/>
            <person name="Zheng X.H."/>
            <person name="Zhong F."/>
            <person name="Delcher A.L."/>
            <person name="Huson D.H."/>
            <person name="Kravitz S.A."/>
            <person name="Mouchard L."/>
            <person name="Reinert K."/>
            <person name="Remington K.A."/>
            <person name="Clark A.G."/>
            <person name="Waterman M.S."/>
            <person name="Eichler E.E."/>
            <person name="Adams M.D."/>
            <person name="Hunkapiller M.W."/>
            <person name="Myers E.W."/>
            <person name="Venter J.C."/>
        </authorList>
    </citation>
    <scope>NUCLEOTIDE SEQUENCE [LARGE SCALE GENOMIC DNA]</scope>
</reference>
<reference key="7">
    <citation type="journal article" date="2004" name="Genome Res.">
        <title>The status, quality, and expansion of the NIH full-length cDNA project: the Mammalian Gene Collection (MGC).</title>
        <authorList>
            <consortium name="The MGC Project Team"/>
        </authorList>
    </citation>
    <scope>NUCLEOTIDE SEQUENCE [LARGE SCALE MRNA] (ISOFORM 1)</scope>
    <source>
        <tissue>Lung</tissue>
        <tissue>Muscle</tissue>
    </source>
</reference>
<sequence>MLKVSAVLCVCAAAWCSQSLAAAAAVAAAGGRSDGGNFLDDKQWLTTISQYDKEVGQWNKFRDEVEDDYFRTWSPGKPFDQALDPAKDPCLKMKCSRHKVCIAQDSQTAVCISHRRLTHRMKEAGVDHRQWRGPILSTCKQCPVVYPSPVCGSDGHTYSFQCKLEYQACVLGKQISVKCEGHCPCPSDKPTSTSRNVKRACSDLEFREVANRLRDWFKALHESGSQNKKTKTLLRPERSRFDTSILPICKDSLGWMFNRLDTNYDLLLDQSELRSIYLDKNEQCTKAFFNSCDTYKDSLISNNEWCYCFQRQQDPPCQTELSNIQKRQGVKKLLGQYIPLCDEDGYYKPTQCHGSVGQCWCVDRYGNEVMGSRINGVADCAIDFEISGDFASGDFHEWTDDEDDEDDIMNDEDEIEDDDEDEGDDDDGGDDHDVYI</sequence>
<name>TICN3_HUMAN</name>